<protein>
    <recommendedName>
        <fullName evidence="1">N-(5'-phosphoribosyl)anthranilate isomerase</fullName>
        <shortName evidence="1">PRAI</shortName>
        <ecNumber evidence="1">5.3.1.24</ecNumber>
    </recommendedName>
</protein>
<comment type="catalytic activity">
    <reaction evidence="1">
        <text>N-(5-phospho-beta-D-ribosyl)anthranilate = 1-(2-carboxyphenylamino)-1-deoxy-D-ribulose 5-phosphate</text>
        <dbReference type="Rhea" id="RHEA:21540"/>
        <dbReference type="ChEBI" id="CHEBI:18277"/>
        <dbReference type="ChEBI" id="CHEBI:58613"/>
        <dbReference type="EC" id="5.3.1.24"/>
    </reaction>
</comment>
<comment type="pathway">
    <text evidence="1">Amino-acid biosynthesis; L-tryptophan biosynthesis; L-tryptophan from chorismate: step 3/5.</text>
</comment>
<comment type="similarity">
    <text evidence="1">Belongs to the TrpF family.</text>
</comment>
<sequence length="230" mass="25621">MRIKICGITKLDQGQAIAEIGATALGFICVPKSPRYITPENIKNIIQKLPINIDKIGVFVNPKIDLLSEIITNTQLNGIQLHGDESPEFCNQLRHSIPNNIEIIKALRIKSPQDLKKANIYENYIDTLLLDAYHPEKLGGTGKTLDWKIIEEFHPTSPWLLAGGLTPENVTKAIQKFILVSQTQIESNHKFNHNFCGIDLSSGVETAPGDKNLVKVRKLFSSLATLTMKK</sequence>
<dbReference type="EC" id="5.3.1.24" evidence="1"/>
<dbReference type="EMBL" id="CP000393">
    <property type="protein sequence ID" value="ABG52952.1"/>
    <property type="molecule type" value="Genomic_DNA"/>
</dbReference>
<dbReference type="RefSeq" id="WP_011613282.1">
    <property type="nucleotide sequence ID" value="NC_008312.1"/>
</dbReference>
<dbReference type="SMR" id="Q10XS2"/>
<dbReference type="STRING" id="203124.Tery_3920"/>
<dbReference type="KEGG" id="ter:Tery_3920"/>
<dbReference type="eggNOG" id="COG0135">
    <property type="taxonomic scope" value="Bacteria"/>
</dbReference>
<dbReference type="HOGENOM" id="CLU_076364_1_1_3"/>
<dbReference type="OrthoDB" id="9786954at2"/>
<dbReference type="UniPathway" id="UPA00035">
    <property type="reaction ID" value="UER00042"/>
</dbReference>
<dbReference type="GO" id="GO:0004640">
    <property type="term" value="F:phosphoribosylanthranilate isomerase activity"/>
    <property type="evidence" value="ECO:0007669"/>
    <property type="project" value="UniProtKB-UniRule"/>
</dbReference>
<dbReference type="GO" id="GO:0000162">
    <property type="term" value="P:L-tryptophan biosynthetic process"/>
    <property type="evidence" value="ECO:0007669"/>
    <property type="project" value="UniProtKB-UniRule"/>
</dbReference>
<dbReference type="CDD" id="cd00405">
    <property type="entry name" value="PRAI"/>
    <property type="match status" value="1"/>
</dbReference>
<dbReference type="Gene3D" id="3.20.20.70">
    <property type="entry name" value="Aldolase class I"/>
    <property type="match status" value="1"/>
</dbReference>
<dbReference type="HAMAP" id="MF_00135">
    <property type="entry name" value="PRAI"/>
    <property type="match status" value="1"/>
</dbReference>
<dbReference type="InterPro" id="IPR013785">
    <property type="entry name" value="Aldolase_TIM"/>
</dbReference>
<dbReference type="InterPro" id="IPR001240">
    <property type="entry name" value="PRAI_dom"/>
</dbReference>
<dbReference type="InterPro" id="IPR011060">
    <property type="entry name" value="RibuloseP-bd_barrel"/>
</dbReference>
<dbReference type="InterPro" id="IPR044643">
    <property type="entry name" value="TrpF_fam"/>
</dbReference>
<dbReference type="NCBIfam" id="NF002298">
    <property type="entry name" value="PRK01222.1-4"/>
    <property type="match status" value="1"/>
</dbReference>
<dbReference type="PANTHER" id="PTHR42894">
    <property type="entry name" value="N-(5'-PHOSPHORIBOSYL)ANTHRANILATE ISOMERASE"/>
    <property type="match status" value="1"/>
</dbReference>
<dbReference type="PANTHER" id="PTHR42894:SF1">
    <property type="entry name" value="N-(5'-PHOSPHORIBOSYL)ANTHRANILATE ISOMERASE"/>
    <property type="match status" value="1"/>
</dbReference>
<dbReference type="Pfam" id="PF00697">
    <property type="entry name" value="PRAI"/>
    <property type="match status" value="1"/>
</dbReference>
<dbReference type="SUPFAM" id="SSF51366">
    <property type="entry name" value="Ribulose-phoshate binding barrel"/>
    <property type="match status" value="1"/>
</dbReference>
<accession>Q10XS2</accession>
<organism>
    <name type="scientific">Trichodesmium erythraeum (strain IMS101)</name>
    <dbReference type="NCBI Taxonomy" id="203124"/>
    <lineage>
        <taxon>Bacteria</taxon>
        <taxon>Bacillati</taxon>
        <taxon>Cyanobacteriota</taxon>
        <taxon>Cyanophyceae</taxon>
        <taxon>Oscillatoriophycideae</taxon>
        <taxon>Oscillatoriales</taxon>
        <taxon>Microcoleaceae</taxon>
        <taxon>Trichodesmium</taxon>
    </lineage>
</organism>
<reference key="1">
    <citation type="journal article" date="2015" name="Proc. Natl. Acad. Sci. U.S.A.">
        <title>Trichodesmium genome maintains abundant, widespread noncoding DNA in situ, despite oligotrophic lifestyle.</title>
        <authorList>
            <person name="Walworth N."/>
            <person name="Pfreundt U."/>
            <person name="Nelson W.C."/>
            <person name="Mincer T."/>
            <person name="Heidelberg J.F."/>
            <person name="Fu F."/>
            <person name="Waterbury J.B."/>
            <person name="Glavina del Rio T."/>
            <person name="Goodwin L."/>
            <person name="Kyrpides N.C."/>
            <person name="Land M.L."/>
            <person name="Woyke T."/>
            <person name="Hutchins D.A."/>
            <person name="Hess W.R."/>
            <person name="Webb E.A."/>
        </authorList>
    </citation>
    <scope>NUCLEOTIDE SEQUENCE [LARGE SCALE GENOMIC DNA]</scope>
    <source>
        <strain>IMS101</strain>
    </source>
</reference>
<feature type="chain" id="PRO_1000018646" description="N-(5'-phosphoribosyl)anthranilate isomerase">
    <location>
        <begin position="1"/>
        <end position="230"/>
    </location>
</feature>
<name>TRPF_TRIEI</name>
<keyword id="KW-0028">Amino-acid biosynthesis</keyword>
<keyword id="KW-0057">Aromatic amino acid biosynthesis</keyword>
<keyword id="KW-0413">Isomerase</keyword>
<keyword id="KW-0822">Tryptophan biosynthesis</keyword>
<evidence type="ECO:0000255" key="1">
    <source>
        <dbReference type="HAMAP-Rule" id="MF_00135"/>
    </source>
</evidence>
<gene>
    <name evidence="1" type="primary">trpF</name>
    <name type="ordered locus">Tery_3920</name>
</gene>
<proteinExistence type="inferred from homology"/>